<keyword id="KW-0131">Cell cycle</keyword>
<keyword id="KW-0132">Cell division</keyword>
<keyword id="KW-0717">Septation</keyword>
<dbReference type="EMBL" id="CP000048">
    <property type="protein sequence ID" value="AAX17281.1"/>
    <property type="molecule type" value="Genomic_DNA"/>
</dbReference>
<dbReference type="RefSeq" id="WP_012422531.1">
    <property type="nucleotide sequence ID" value="NZ_CP073136.1"/>
</dbReference>
<dbReference type="SMR" id="B2S1C7"/>
<dbReference type="GeneID" id="71843615"/>
<dbReference type="KEGG" id="bhr:BH0785"/>
<dbReference type="HOGENOM" id="CLU_103669_2_1_12"/>
<dbReference type="Proteomes" id="UP000008834">
    <property type="component" value="Chromosome"/>
</dbReference>
<dbReference type="GO" id="GO:0000917">
    <property type="term" value="P:division septum assembly"/>
    <property type="evidence" value="ECO:0007669"/>
    <property type="project" value="UniProtKB-KW"/>
</dbReference>
<dbReference type="GO" id="GO:0030435">
    <property type="term" value="P:sporulation resulting in formation of a cellular spore"/>
    <property type="evidence" value="ECO:0007669"/>
    <property type="project" value="InterPro"/>
</dbReference>
<dbReference type="Gene3D" id="3.30.1120.40">
    <property type="entry name" value="Stage V sporulation protein G"/>
    <property type="match status" value="1"/>
</dbReference>
<dbReference type="HAMAP" id="MF_00819">
    <property type="entry name" value="SpoVG"/>
    <property type="match status" value="1"/>
</dbReference>
<dbReference type="InterPro" id="IPR007170">
    <property type="entry name" value="SpoVG"/>
</dbReference>
<dbReference type="InterPro" id="IPR036751">
    <property type="entry name" value="SpoVG_sf"/>
</dbReference>
<dbReference type="NCBIfam" id="NF009749">
    <property type="entry name" value="PRK13259.1"/>
    <property type="match status" value="1"/>
</dbReference>
<dbReference type="PANTHER" id="PTHR38429">
    <property type="entry name" value="SEPTATION PROTEIN SPOVG-RELATED"/>
    <property type="match status" value="1"/>
</dbReference>
<dbReference type="PANTHER" id="PTHR38429:SF1">
    <property type="entry name" value="SEPTATION PROTEIN SPOVG-RELATED"/>
    <property type="match status" value="1"/>
</dbReference>
<dbReference type="Pfam" id="PF04026">
    <property type="entry name" value="SpoVG"/>
    <property type="match status" value="1"/>
</dbReference>
<dbReference type="SUPFAM" id="SSF160537">
    <property type="entry name" value="SpoVG-like"/>
    <property type="match status" value="1"/>
</dbReference>
<protein>
    <recommendedName>
        <fullName evidence="1">Putative septation protein SpoVG</fullName>
    </recommendedName>
</protein>
<comment type="function">
    <text evidence="1">Could be involved in septation.</text>
</comment>
<comment type="similarity">
    <text evidence="1">Belongs to the SpoVG family.</text>
</comment>
<evidence type="ECO:0000255" key="1">
    <source>
        <dbReference type="HAMAP-Rule" id="MF_00819"/>
    </source>
</evidence>
<proteinExistence type="inferred from homology"/>
<name>SP5G_BORHD</name>
<organism>
    <name type="scientific">Borrelia hermsii (strain HS1 / DAH)</name>
    <dbReference type="NCBI Taxonomy" id="314723"/>
    <lineage>
        <taxon>Bacteria</taxon>
        <taxon>Pseudomonadati</taxon>
        <taxon>Spirochaetota</taxon>
        <taxon>Spirochaetia</taxon>
        <taxon>Spirochaetales</taxon>
        <taxon>Borreliaceae</taxon>
        <taxon>Borrelia</taxon>
    </lineage>
</organism>
<accession>B2S1C7</accession>
<gene>
    <name evidence="1" type="primary">spoVG</name>
    <name type="ordered locus">BH0785</name>
</gene>
<reference key="1">
    <citation type="submission" date="2004-12" db="EMBL/GenBank/DDBJ databases">
        <title>The genome sequence of Borrelia hermsii and Borrelia turicatae: comparative analysis of two agents of endemic N. America relapsing fever.</title>
        <authorList>
            <person name="Porcella S.F."/>
            <person name="Raffel S.J."/>
            <person name="Schrumpf M.E."/>
            <person name="Montgomery B."/>
            <person name="Smith T."/>
            <person name="Schwan T.G."/>
        </authorList>
    </citation>
    <scope>NUCLEOTIDE SEQUENCE [LARGE SCALE GENOMIC DNA]</scope>
    <source>
        <strain>HS1 / DAH</strain>
    </source>
</reference>
<sequence length="96" mass="11086">MNITDVRIRRVDNKNPGSKLLAYVTVTFDDCLVLHNIRVIRGQKGVFIVMPNRRTKVGEYKDIVHPINQSFREILQSAIFKEYVKENPSSLELEIG</sequence>
<feature type="chain" id="PRO_1000196494" description="Putative septation protein SpoVG">
    <location>
        <begin position="1"/>
        <end position="96"/>
    </location>
</feature>